<reference key="1">
    <citation type="journal article" date="2004" name="Nat. Genet.">
        <title>Complete sequencing and characterization of 21,243 full-length human cDNAs.</title>
        <authorList>
            <person name="Ota T."/>
            <person name="Suzuki Y."/>
            <person name="Nishikawa T."/>
            <person name="Otsuki T."/>
            <person name="Sugiyama T."/>
            <person name="Irie R."/>
            <person name="Wakamatsu A."/>
            <person name="Hayashi K."/>
            <person name="Sato H."/>
            <person name="Nagai K."/>
            <person name="Kimura K."/>
            <person name="Makita H."/>
            <person name="Sekine M."/>
            <person name="Obayashi M."/>
            <person name="Nishi T."/>
            <person name="Shibahara T."/>
            <person name="Tanaka T."/>
            <person name="Ishii S."/>
            <person name="Yamamoto J."/>
            <person name="Saito K."/>
            <person name="Kawai Y."/>
            <person name="Isono Y."/>
            <person name="Nakamura Y."/>
            <person name="Nagahari K."/>
            <person name="Murakami K."/>
            <person name="Yasuda T."/>
            <person name="Iwayanagi T."/>
            <person name="Wagatsuma M."/>
            <person name="Shiratori A."/>
            <person name="Sudo H."/>
            <person name="Hosoiri T."/>
            <person name="Kaku Y."/>
            <person name="Kodaira H."/>
            <person name="Kondo H."/>
            <person name="Sugawara M."/>
            <person name="Takahashi M."/>
            <person name="Kanda K."/>
            <person name="Yokoi T."/>
            <person name="Furuya T."/>
            <person name="Kikkawa E."/>
            <person name="Omura Y."/>
            <person name="Abe K."/>
            <person name="Kamihara K."/>
            <person name="Katsuta N."/>
            <person name="Sato K."/>
            <person name="Tanikawa M."/>
            <person name="Yamazaki M."/>
            <person name="Ninomiya K."/>
            <person name="Ishibashi T."/>
            <person name="Yamashita H."/>
            <person name="Murakawa K."/>
            <person name="Fujimori K."/>
            <person name="Tanai H."/>
            <person name="Kimata M."/>
            <person name="Watanabe M."/>
            <person name="Hiraoka S."/>
            <person name="Chiba Y."/>
            <person name="Ishida S."/>
            <person name="Ono Y."/>
            <person name="Takiguchi S."/>
            <person name="Watanabe S."/>
            <person name="Yosida M."/>
            <person name="Hotuta T."/>
            <person name="Kusano J."/>
            <person name="Kanehori K."/>
            <person name="Takahashi-Fujii A."/>
            <person name="Hara H."/>
            <person name="Tanase T.-O."/>
            <person name="Nomura Y."/>
            <person name="Togiya S."/>
            <person name="Komai F."/>
            <person name="Hara R."/>
            <person name="Takeuchi K."/>
            <person name="Arita M."/>
            <person name="Imose N."/>
            <person name="Musashino K."/>
            <person name="Yuuki H."/>
            <person name="Oshima A."/>
            <person name="Sasaki N."/>
            <person name="Aotsuka S."/>
            <person name="Yoshikawa Y."/>
            <person name="Matsunawa H."/>
            <person name="Ichihara T."/>
            <person name="Shiohata N."/>
            <person name="Sano S."/>
            <person name="Moriya S."/>
            <person name="Momiyama H."/>
            <person name="Satoh N."/>
            <person name="Takami S."/>
            <person name="Terashima Y."/>
            <person name="Suzuki O."/>
            <person name="Nakagawa S."/>
            <person name="Senoh A."/>
            <person name="Mizoguchi H."/>
            <person name="Goto Y."/>
            <person name="Shimizu F."/>
            <person name="Wakebe H."/>
            <person name="Hishigaki H."/>
            <person name="Watanabe T."/>
            <person name="Sugiyama A."/>
            <person name="Takemoto M."/>
            <person name="Kawakami B."/>
            <person name="Yamazaki M."/>
            <person name="Watanabe K."/>
            <person name="Kumagai A."/>
            <person name="Itakura S."/>
            <person name="Fukuzumi Y."/>
            <person name="Fujimori Y."/>
            <person name="Komiyama M."/>
            <person name="Tashiro H."/>
            <person name="Tanigami A."/>
            <person name="Fujiwara T."/>
            <person name="Ono T."/>
            <person name="Yamada K."/>
            <person name="Fujii Y."/>
            <person name="Ozaki K."/>
            <person name="Hirao M."/>
            <person name="Ohmori Y."/>
            <person name="Kawabata A."/>
            <person name="Hikiji T."/>
            <person name="Kobatake N."/>
            <person name="Inagaki H."/>
            <person name="Ikema Y."/>
            <person name="Okamoto S."/>
            <person name="Okitani R."/>
            <person name="Kawakami T."/>
            <person name="Noguchi S."/>
            <person name="Itoh T."/>
            <person name="Shigeta K."/>
            <person name="Senba T."/>
            <person name="Matsumura K."/>
            <person name="Nakajima Y."/>
            <person name="Mizuno T."/>
            <person name="Morinaga M."/>
            <person name="Sasaki M."/>
            <person name="Togashi T."/>
            <person name="Oyama M."/>
            <person name="Hata H."/>
            <person name="Watanabe M."/>
            <person name="Komatsu T."/>
            <person name="Mizushima-Sugano J."/>
            <person name="Satoh T."/>
            <person name="Shirai Y."/>
            <person name="Takahashi Y."/>
            <person name="Nakagawa K."/>
            <person name="Okumura K."/>
            <person name="Nagase T."/>
            <person name="Nomura N."/>
            <person name="Kikuchi H."/>
            <person name="Masuho Y."/>
            <person name="Yamashita R."/>
            <person name="Nakai K."/>
            <person name="Yada T."/>
            <person name="Nakamura Y."/>
            <person name="Ohara O."/>
            <person name="Isogai T."/>
            <person name="Sugano S."/>
        </authorList>
    </citation>
    <scope>NUCLEOTIDE SEQUENCE [LARGE SCALE MRNA]</scope>
    <source>
        <tissue>Testis</tissue>
    </source>
</reference>
<reference key="2">
    <citation type="submission" date="2005-07" db="EMBL/GenBank/DDBJ databases">
        <authorList>
            <person name="Mural R.J."/>
            <person name="Istrail S."/>
            <person name="Sutton G.G."/>
            <person name="Florea L."/>
            <person name="Halpern A.L."/>
            <person name="Mobarry C.M."/>
            <person name="Lippert R."/>
            <person name="Walenz B."/>
            <person name="Shatkay H."/>
            <person name="Dew I."/>
            <person name="Miller J.R."/>
            <person name="Flanigan M.J."/>
            <person name="Edwards N.J."/>
            <person name="Bolanos R."/>
            <person name="Fasulo D."/>
            <person name="Halldorsson B.V."/>
            <person name="Hannenhalli S."/>
            <person name="Turner R."/>
            <person name="Yooseph S."/>
            <person name="Lu F."/>
            <person name="Nusskern D.R."/>
            <person name="Shue B.C."/>
            <person name="Zheng X.H."/>
            <person name="Zhong F."/>
            <person name="Delcher A.L."/>
            <person name="Huson D.H."/>
            <person name="Kravitz S.A."/>
            <person name="Mouchard L."/>
            <person name="Reinert K."/>
            <person name="Remington K.A."/>
            <person name="Clark A.G."/>
            <person name="Waterman M.S."/>
            <person name="Eichler E.E."/>
            <person name="Adams M.D."/>
            <person name="Hunkapiller M.W."/>
            <person name="Myers E.W."/>
            <person name="Venter J.C."/>
        </authorList>
    </citation>
    <scope>NUCLEOTIDE SEQUENCE [LARGE SCALE GENOMIC DNA]</scope>
</reference>
<reference key="3">
    <citation type="journal article" date="2004" name="Genome Res.">
        <title>The status, quality, and expansion of the NIH full-length cDNA project: the Mammalian Gene Collection (MGC).</title>
        <authorList>
            <consortium name="The MGC Project Team"/>
        </authorList>
    </citation>
    <scope>NUCLEOTIDE SEQUENCE [LARGE SCALE MRNA]</scope>
    <source>
        <tissue>Ovary</tissue>
        <tissue>Skin</tissue>
    </source>
</reference>
<reference key="4">
    <citation type="journal article" date="2006" name="Mol. Cell">
        <title>A family of diverse Cul4-Ddb1-interacting proteins includes Cdt2, which is required for S phase destruction of the replication factor Cdt1.</title>
        <authorList>
            <person name="Jin J."/>
            <person name="Arias E.E."/>
            <person name="Chen J."/>
            <person name="Harper J.W."/>
            <person name="Walter J.C."/>
        </authorList>
    </citation>
    <scope>FUNCTION</scope>
    <scope>INTERACTION WITH DDB1 AND CUL4A</scope>
    <scope>IDENTIFICATION BY MASS SPECTROMETRY</scope>
</reference>
<reference key="5">
    <citation type="journal article" date="2008" name="Proc. Natl. Acad. Sci. U.S.A.">
        <title>A quantitative atlas of mitotic phosphorylation.</title>
        <authorList>
            <person name="Dephoure N."/>
            <person name="Zhou C."/>
            <person name="Villen J."/>
            <person name="Beausoleil S.A."/>
            <person name="Bakalarski C.E."/>
            <person name="Elledge S.J."/>
            <person name="Gygi S.P."/>
        </authorList>
    </citation>
    <scope>PHOSPHORYLATION [LARGE SCALE ANALYSIS] AT SER-314</scope>
    <scope>IDENTIFICATION BY MASS SPECTROMETRY [LARGE SCALE ANALYSIS]</scope>
    <source>
        <tissue>Cervix carcinoma</tissue>
    </source>
</reference>
<reference key="6">
    <citation type="journal article" date="2011" name="Sci. Signal.">
        <title>System-wide temporal characterization of the proteome and phosphoproteome of human embryonic stem cell differentiation.</title>
        <authorList>
            <person name="Rigbolt K.T."/>
            <person name="Prokhorova T.A."/>
            <person name="Akimov V."/>
            <person name="Henningsen J."/>
            <person name="Johansen P.T."/>
            <person name="Kratchmarova I."/>
            <person name="Kassem M."/>
            <person name="Mann M."/>
            <person name="Olsen J.V."/>
            <person name="Blagoev B."/>
        </authorList>
    </citation>
    <scope>IDENTIFICATION BY MASS SPECTROMETRY [LARGE SCALE ANALYSIS]</scope>
</reference>
<reference key="7">
    <citation type="journal article" date="2012" name="Proc. Natl. Acad. Sci. U.S.A.">
        <title>N-terminal acetylome analyses and functional insights of the N-terminal acetyltransferase NatB.</title>
        <authorList>
            <person name="Van Damme P."/>
            <person name="Lasa M."/>
            <person name="Polevoda B."/>
            <person name="Gazquez C."/>
            <person name="Elosegui-Artola A."/>
            <person name="Kim D.S."/>
            <person name="De Juan-Pardo E."/>
            <person name="Demeyer K."/>
            <person name="Hole K."/>
            <person name="Larrea E."/>
            <person name="Timmerman E."/>
            <person name="Prieto J."/>
            <person name="Arnesen T."/>
            <person name="Sherman F."/>
            <person name="Gevaert K."/>
            <person name="Aldabe R."/>
        </authorList>
    </citation>
    <scope>IDENTIFICATION BY MASS SPECTROMETRY [LARGE SCALE ANALYSIS]</scope>
</reference>
<reference key="8">
    <citation type="journal article" date="2013" name="J. Proteome Res.">
        <title>Toward a comprehensive characterization of a human cancer cell phosphoproteome.</title>
        <authorList>
            <person name="Zhou H."/>
            <person name="Di Palma S."/>
            <person name="Preisinger C."/>
            <person name="Peng M."/>
            <person name="Polat A.N."/>
            <person name="Heck A.J."/>
            <person name="Mohammed S."/>
        </authorList>
    </citation>
    <scope>PHOSPHORYLATION [LARGE SCALE ANALYSIS] AT SER-50 AND SER-310</scope>
    <scope>IDENTIFICATION BY MASS SPECTROMETRY [LARGE SCALE ANALYSIS]</scope>
    <source>
        <tissue>Cervix carcinoma</tissue>
        <tissue>Erythroleukemia</tissue>
    </source>
</reference>
<reference key="9">
    <citation type="journal article" date="2017" name="Nat. Chem. Biol.">
        <title>Selective degradation of splicing factor CAPERalpha by anticancer sulfonamides.</title>
        <authorList>
            <person name="Uehara T."/>
            <person name="Minoshima Y."/>
            <person name="Sagane K."/>
            <person name="Sugi N.H."/>
            <person name="Mitsuhashi K.O."/>
            <person name="Yamamoto N."/>
            <person name="Kamiyama H."/>
            <person name="Takahashi K."/>
            <person name="Kotake Y."/>
            <person name="Uesugi M."/>
            <person name="Yokoi A."/>
            <person name="Inoue A."/>
            <person name="Yoshida T."/>
            <person name="Mabuchi M."/>
            <person name="Tanaka A."/>
            <person name="Owa T."/>
        </authorList>
    </citation>
    <scope>FUNCTION</scope>
    <scope>PATHWAY</scope>
    <scope>IDENTIFICATION IN THE DCX(DCAF15) COMPLEX</scope>
    <scope>ACTIVITY REGULATION</scope>
</reference>
<reference key="10">
    <citation type="journal article" date="2017" name="Science">
        <title>Anticancer sulfonamides target splicing by inducing RBM39 degradation via recruitment to DCAF15.</title>
        <authorList>
            <person name="Han T."/>
            <person name="Goralski M."/>
            <person name="Gaskill N."/>
            <person name="Capota E."/>
            <person name="Kim J."/>
            <person name="Ting T.C."/>
            <person name="Xie Y."/>
            <person name="Williams N.S."/>
            <person name="Nijhawan D."/>
        </authorList>
    </citation>
    <scope>FUNCTION</scope>
    <scope>PATHWAY</scope>
    <scope>IDENTIFICATION IN THE DCX(DCAF15) COMPLEX</scope>
    <scope>ACTIVITY REGULATION</scope>
</reference>
<reference key="11">
    <citation type="journal article" date="2017" name="Science">
        <authorList>
            <person name="Han T."/>
            <person name="Goralski M."/>
            <person name="Gaskill N."/>
            <person name="Capota E."/>
            <person name="Kim J."/>
            <person name="Ting T.C."/>
            <person name="Xie Y."/>
            <person name="Williams N.S."/>
            <person name="Nijhawan D."/>
        </authorList>
    </citation>
    <scope>ERRATUM OF PUBMED:28302793</scope>
</reference>
<reference key="12">
    <citation type="journal article" date="2019" name="Cell Rep.">
        <title>Aryl sulfonamides degrade RBM39 and RBM23 by recruitment to CRL4-DCAF15.</title>
        <authorList>
            <person name="Ting T.C."/>
            <person name="Goralski M."/>
            <person name="Klein K."/>
            <person name="Wang B."/>
            <person name="Kim J."/>
            <person name="Xie Y."/>
            <person name="Nijhawan D."/>
        </authorList>
    </citation>
    <scope>FUNCTION</scope>
    <scope>PATHWAY</scope>
    <scope>IDENTIFICATION IN THE DCX(DCAF15) COMPLEX</scope>
    <scope>MUTAGENESIS OF VAL-90; LEU-91; TRP-112; PHE-129; VAL-182; CYS-196; GLN-232; LEU-244; LEU-392; THR-420; GLU-444; VAL-453 AND ASP-475</scope>
</reference>
<reference key="13">
    <citation type="journal article" date="2019" name="Elife">
        <title>Systematic identification of cancer cell vulnerabilities to natural killer cell-mediated immune surveillance.</title>
        <authorList>
            <person name="Pech M.F."/>
            <person name="Fong L.E."/>
            <person name="Villalta J.E."/>
            <person name="Chan L.J."/>
            <person name="Kharbanda S."/>
            <person name="O'Brien J.J."/>
            <person name="McAllister F.E."/>
            <person name="Firestone A.J."/>
            <person name="Jan C.H."/>
            <person name="Settleman J."/>
        </authorList>
    </citation>
    <scope>FUNCTION</scope>
    <scope>PATHWAY</scope>
    <scope>IDENTIFICATION IN THE DCX(DCAF15) COMPLEX</scope>
</reference>
<reference key="14">
    <citation type="journal article" date="2020" name="J. Proteomics">
        <title>pSILAC method coupled with two complementary digestion approaches reveals PRPF39 as a new E7070-dependent DCAF15 substrate.</title>
        <authorList>
            <person name="Jia X."/>
            <person name="Pan L."/>
            <person name="Zhu M."/>
            <person name="Hu H."/>
            <person name="Zhai L."/>
            <person name="Liu J."/>
            <person name="Hu M."/>
            <person name="Liu B."/>
            <person name="Tan M."/>
        </authorList>
    </citation>
    <scope>FUNCTION</scope>
</reference>
<reference evidence="16 17 18" key="15">
    <citation type="journal article" date="2020" name="Nat. Chem. Biol.">
        <title>Structural complementarity facilitates E7820-mediated degradation of RBM39 by DCAF15.</title>
        <authorList>
            <person name="Faust T.B."/>
            <person name="Yoon H."/>
            <person name="Nowak R.P."/>
            <person name="Donovan K.A."/>
            <person name="Li Z."/>
            <person name="Cai Q."/>
            <person name="Eleuteri N.A."/>
            <person name="Zhang T."/>
            <person name="Gray N.S."/>
            <person name="Fischer E.S."/>
        </authorList>
    </citation>
    <scope>X-RAY CRYSTALLOGRAPHY (2.9 ANGSTROMS) OF 34-290 AND 383-600 IN COMPLEX WITH ZINC; ARYL-SULFONAMIDE E7820; DDB1; DDA1 AND RBM39</scope>
    <scope>FUNCTION</scope>
    <scope>ACTIVITY REGULATION</scope>
    <scope>IDENTIFICATION IN THE DCX(DCAF15) COMPLEX</scope>
</reference>
<reference evidence="19 20 21" key="16">
    <citation type="journal article" date="2020" name="Nat. Chem. Biol.">
        <title>Structural basis of indisulam-mediated RBM39 recruitment to DCAF15 E3 ligase complex.</title>
        <authorList>
            <person name="Bussiere D.E."/>
            <person name="Xie L."/>
            <person name="Srinivas H."/>
            <person name="Shu W."/>
            <person name="Burke A."/>
            <person name="Be C."/>
            <person name="Zhao J."/>
            <person name="Godbole A."/>
            <person name="King D."/>
            <person name="Karki R.G."/>
            <person name="Hornak V."/>
            <person name="Xu F."/>
            <person name="Cobb J."/>
            <person name="Carte N."/>
            <person name="Frank A.O."/>
            <person name="Frommlet A."/>
            <person name="Graff P."/>
            <person name="Knapp M."/>
            <person name="Fazal A."/>
            <person name="Okram B."/>
            <person name="Jiang S."/>
            <person name="Michellys P.Y."/>
            <person name="Beckwith R."/>
            <person name="Voshol H."/>
            <person name="Wiesmann C."/>
            <person name="Solomon J.M."/>
            <person name="Paulk J."/>
        </authorList>
    </citation>
    <scope>X-RAY CRYSTALLOGRAPHY (2.30 ANGSTROMS) OF 2-600 IN COMPLEX WITH ARYL-SULFONAMIDE E7820; DDB1; DDA1 AND RBM39</scope>
    <scope>STRUCTURE BY ELECTRON MICROSCOPY (3.54 ANGSTROMS) IN COMPLEX WITH ARYL-SULFONAMIDE E7820; DDB1; DDA1 AND RBM39</scope>
    <scope>FUNCTION</scope>
    <scope>ACTIVITY REGULATION</scope>
    <scope>IDENTIFICATION IN THE DCX(DCAF15) COMPLEX</scope>
</reference>
<reference evidence="15" key="17">
    <citation type="journal article" date="2019" name="Structure">
        <title>Structural basis and kinetic pathway of RBM39 recruitment to DCAF15 by a sulfonamide molecular glue E7820.</title>
        <authorList>
            <person name="Du X."/>
            <person name="Volkov O.A."/>
            <person name="Czerwinski R.M."/>
            <person name="Tan H."/>
            <person name="Huerta C."/>
            <person name="Morton E.R."/>
            <person name="Rizzi J.P."/>
            <person name="Wehn P.M."/>
            <person name="Xu R."/>
            <person name="Nijhawan D."/>
            <person name="Wallace E.M."/>
        </authorList>
    </citation>
    <scope>X-RAY CRYSTALLOGRAPHY (2.90 ANGSTROMS) OF 2-600 IN COMPLEX WITH ZINC; ARYL-SULFONAMIDE E7820; DDB1; DDA1 AND RBM39</scope>
    <scope>IDENTIFICATION IN THE DCX(DCAF15) COMPLEX</scope>
</reference>
<protein>
    <recommendedName>
        <fullName evidence="12">DDB1- and CUL4-associated factor 15</fullName>
    </recommendedName>
</protein>
<keyword id="KW-0002">3D-structure</keyword>
<keyword id="KW-0391">Immunity</keyword>
<keyword id="KW-0479">Metal-binding</keyword>
<keyword id="KW-0597">Phosphoprotein</keyword>
<keyword id="KW-1267">Proteomics identification</keyword>
<keyword id="KW-1185">Reference proteome</keyword>
<keyword id="KW-0833">Ubl conjugation pathway</keyword>
<keyword id="KW-0862">Zinc</keyword>
<organism>
    <name type="scientific">Homo sapiens</name>
    <name type="common">Human</name>
    <dbReference type="NCBI Taxonomy" id="9606"/>
    <lineage>
        <taxon>Eukaryota</taxon>
        <taxon>Metazoa</taxon>
        <taxon>Chordata</taxon>
        <taxon>Craniata</taxon>
        <taxon>Vertebrata</taxon>
        <taxon>Euteleostomi</taxon>
        <taxon>Mammalia</taxon>
        <taxon>Eutheria</taxon>
        <taxon>Euarchontoglires</taxon>
        <taxon>Primates</taxon>
        <taxon>Haplorrhini</taxon>
        <taxon>Catarrhini</taxon>
        <taxon>Hominidae</taxon>
        <taxon>Homo</taxon>
    </lineage>
</organism>
<evidence type="ECO:0000256" key="1">
    <source>
        <dbReference type="SAM" id="MobiDB-lite"/>
    </source>
</evidence>
<evidence type="ECO:0000269" key="2">
    <source>
    </source>
</evidence>
<evidence type="ECO:0000269" key="3">
    <source>
    </source>
</evidence>
<evidence type="ECO:0000269" key="4">
    <source>
    </source>
</evidence>
<evidence type="ECO:0000269" key="5">
    <source>
    </source>
</evidence>
<evidence type="ECO:0000269" key="6">
    <source>
    </source>
</evidence>
<evidence type="ECO:0000269" key="7">
    <source>
    </source>
</evidence>
<evidence type="ECO:0000269" key="8">
    <source>
    </source>
</evidence>
<evidence type="ECO:0000269" key="9">
    <source>
    </source>
</evidence>
<evidence type="ECO:0000269" key="10">
    <source>
    </source>
</evidence>
<evidence type="ECO:0000303" key="11">
    <source>
    </source>
</evidence>
<evidence type="ECO:0000305" key="12"/>
<evidence type="ECO:0000305" key="13">
    <source>
    </source>
</evidence>
<evidence type="ECO:0000312" key="14">
    <source>
        <dbReference type="HGNC" id="HGNC:25095"/>
    </source>
</evidence>
<evidence type="ECO:0007744" key="15">
    <source>
        <dbReference type="PDB" id="6PAI"/>
    </source>
</evidence>
<evidence type="ECO:0007744" key="16">
    <source>
        <dbReference type="PDB" id="6Q0R"/>
    </source>
</evidence>
<evidence type="ECO:0007744" key="17">
    <source>
        <dbReference type="PDB" id="6Q0V"/>
    </source>
</evidence>
<evidence type="ECO:0007744" key="18">
    <source>
        <dbReference type="PDB" id="6Q0W"/>
    </source>
</evidence>
<evidence type="ECO:0007744" key="19">
    <source>
        <dbReference type="PDB" id="6SJ7"/>
    </source>
</evidence>
<evidence type="ECO:0007744" key="20">
    <source>
        <dbReference type="PDB" id="6UD7"/>
    </source>
</evidence>
<evidence type="ECO:0007744" key="21">
    <source>
        <dbReference type="PDB" id="6UE5"/>
    </source>
</evidence>
<evidence type="ECO:0007744" key="22">
    <source>
    </source>
</evidence>
<evidence type="ECO:0007744" key="23">
    <source>
    </source>
</evidence>
<evidence type="ECO:0007829" key="24">
    <source>
        <dbReference type="PDB" id="6PAI"/>
    </source>
</evidence>
<evidence type="ECO:0007829" key="25">
    <source>
        <dbReference type="PDB" id="6Q0W"/>
    </source>
</evidence>
<evidence type="ECO:0007829" key="26">
    <source>
        <dbReference type="PDB" id="6UD7"/>
    </source>
</evidence>
<dbReference type="EMBL" id="AK093072">
    <property type="protein sequence ID" value="BAG52648.1"/>
    <property type="molecule type" value="mRNA"/>
</dbReference>
<dbReference type="EMBL" id="CH471106">
    <property type="protein sequence ID" value="EAW84386.1"/>
    <property type="molecule type" value="Genomic_DNA"/>
</dbReference>
<dbReference type="EMBL" id="BC002926">
    <property type="protein sequence ID" value="AAH02926.2"/>
    <property type="molecule type" value="mRNA"/>
</dbReference>
<dbReference type="EMBL" id="BC013280">
    <property type="protein sequence ID" value="AAH13280.2"/>
    <property type="status" value="ALT_FRAME"/>
    <property type="molecule type" value="mRNA"/>
</dbReference>
<dbReference type="EMBL" id="BC080575">
    <property type="protein sequence ID" value="AAH80575.1"/>
    <property type="molecule type" value="mRNA"/>
</dbReference>
<dbReference type="CCDS" id="CCDS32926.1"/>
<dbReference type="RefSeq" id="NP_612362.2">
    <property type="nucleotide sequence ID" value="NM_138353.3"/>
</dbReference>
<dbReference type="PDB" id="6PAI">
    <property type="method" value="X-ray"/>
    <property type="resolution" value="2.90 A"/>
    <property type="chains" value="C=2-600"/>
</dbReference>
<dbReference type="PDB" id="6Q0R">
    <property type="method" value="X-ray"/>
    <property type="resolution" value="2.90 A"/>
    <property type="chains" value="B=34-260, C=383-600"/>
</dbReference>
<dbReference type="PDB" id="6Q0V">
    <property type="method" value="X-ray"/>
    <property type="resolution" value="2.90 A"/>
    <property type="chains" value="B=34-260, C=383-600"/>
</dbReference>
<dbReference type="PDB" id="6Q0W">
    <property type="method" value="X-ray"/>
    <property type="resolution" value="2.90 A"/>
    <property type="chains" value="B=34-260, C=383-600"/>
</dbReference>
<dbReference type="PDB" id="6SJ7">
    <property type="method" value="EM"/>
    <property type="resolution" value="3.54 A"/>
    <property type="chains" value="A=1-600"/>
</dbReference>
<dbReference type="PDB" id="6UD7">
    <property type="method" value="X-ray"/>
    <property type="resolution" value="2.30 A"/>
    <property type="chains" value="A=2-600"/>
</dbReference>
<dbReference type="PDB" id="6UE5">
    <property type="method" value="X-ray"/>
    <property type="resolution" value="2.61 A"/>
    <property type="chains" value="A=2-600"/>
</dbReference>
<dbReference type="PDB" id="8ROX">
    <property type="method" value="EM"/>
    <property type="resolution" value="3.30 A"/>
    <property type="chains" value="A=1-600"/>
</dbReference>
<dbReference type="PDB" id="8ROY">
    <property type="method" value="EM"/>
    <property type="resolution" value="3.10 A"/>
    <property type="chains" value="A=1-600"/>
</dbReference>
<dbReference type="PDBsum" id="6PAI"/>
<dbReference type="PDBsum" id="6Q0R"/>
<dbReference type="PDBsum" id="6Q0V"/>
<dbReference type="PDBsum" id="6Q0W"/>
<dbReference type="PDBsum" id="6SJ7"/>
<dbReference type="PDBsum" id="6UD7"/>
<dbReference type="PDBsum" id="6UE5"/>
<dbReference type="PDBsum" id="8ROX"/>
<dbReference type="PDBsum" id="8ROY"/>
<dbReference type="EMDB" id="EMD-10213"/>
<dbReference type="EMDB" id="EMD-19406"/>
<dbReference type="EMDB" id="EMD-19407"/>
<dbReference type="SMR" id="Q66K64"/>
<dbReference type="BioGRID" id="124705">
    <property type="interactions" value="265"/>
</dbReference>
<dbReference type="ComplexPortal" id="CPX-2765">
    <property type="entry name" value="CRL4-DCAF15 E3 ubiquitin ligase complex, CUL4B variant"/>
</dbReference>
<dbReference type="ComplexPortal" id="CPX-2766">
    <property type="entry name" value="CRL4-DCAF15 E3 ubiquitin ligase complex, CUL4A variant"/>
</dbReference>
<dbReference type="FunCoup" id="Q66K64">
    <property type="interactions" value="346"/>
</dbReference>
<dbReference type="IntAct" id="Q66K64">
    <property type="interactions" value="23"/>
</dbReference>
<dbReference type="STRING" id="9606.ENSP00000254337"/>
<dbReference type="BindingDB" id="Q66K64"/>
<dbReference type="ChEMBL" id="CHEMBL5465261"/>
<dbReference type="iPTMnet" id="Q66K64"/>
<dbReference type="PhosphoSitePlus" id="Q66K64"/>
<dbReference type="BioMuta" id="DCAF15"/>
<dbReference type="DMDM" id="74736316"/>
<dbReference type="jPOST" id="Q66K64"/>
<dbReference type="MassIVE" id="Q66K64"/>
<dbReference type="PaxDb" id="9606-ENSP00000254337"/>
<dbReference type="PeptideAtlas" id="Q66K64"/>
<dbReference type="ProteomicsDB" id="65955"/>
<dbReference type="Pumba" id="Q66K64"/>
<dbReference type="Antibodypedia" id="77450">
    <property type="antibodies" value="3 antibodies from 3 providers"/>
</dbReference>
<dbReference type="DNASU" id="90379"/>
<dbReference type="Ensembl" id="ENST00000254337.11">
    <property type="protein sequence ID" value="ENSP00000254337.5"/>
    <property type="gene ID" value="ENSG00000132017.11"/>
</dbReference>
<dbReference type="Ensembl" id="ENST00000672437.1">
    <property type="protein sequence ID" value="ENSP00000500158.1"/>
    <property type="gene ID" value="ENSG00000288453.1"/>
</dbReference>
<dbReference type="GeneID" id="90379"/>
<dbReference type="KEGG" id="hsa:90379"/>
<dbReference type="MANE-Select" id="ENST00000254337.11">
    <property type="protein sequence ID" value="ENSP00000254337.5"/>
    <property type="RefSeq nucleotide sequence ID" value="NM_138353.4"/>
    <property type="RefSeq protein sequence ID" value="NP_612362.2"/>
</dbReference>
<dbReference type="UCSC" id="uc002mxt.4">
    <property type="organism name" value="human"/>
</dbReference>
<dbReference type="AGR" id="HGNC:25095"/>
<dbReference type="CTD" id="90379"/>
<dbReference type="DisGeNET" id="90379"/>
<dbReference type="GeneCards" id="DCAF15"/>
<dbReference type="HGNC" id="HGNC:25095">
    <property type="gene designation" value="DCAF15"/>
</dbReference>
<dbReference type="HPA" id="ENSG00000132017">
    <property type="expression patterns" value="Low tissue specificity"/>
</dbReference>
<dbReference type="MIM" id="620109">
    <property type="type" value="gene"/>
</dbReference>
<dbReference type="neXtProt" id="NX_Q66K64"/>
<dbReference type="OpenTargets" id="ENSG00000132017"/>
<dbReference type="PharmGKB" id="PA165393390"/>
<dbReference type="VEuPathDB" id="HostDB:ENSG00000132017"/>
<dbReference type="eggNOG" id="ENOG502QQCQ">
    <property type="taxonomic scope" value="Eukaryota"/>
</dbReference>
<dbReference type="GeneTree" id="ENSGT00390000011987"/>
<dbReference type="HOGENOM" id="CLU_031970_0_0_1"/>
<dbReference type="InParanoid" id="Q66K64"/>
<dbReference type="OMA" id="QILYTKG"/>
<dbReference type="OrthoDB" id="6354267at2759"/>
<dbReference type="PAN-GO" id="Q66K64">
    <property type="GO annotations" value="2 GO annotations based on evolutionary models"/>
</dbReference>
<dbReference type="PhylomeDB" id="Q66K64"/>
<dbReference type="TreeFam" id="TF329680"/>
<dbReference type="PathwayCommons" id="Q66K64"/>
<dbReference type="SignaLink" id="Q66K64"/>
<dbReference type="SIGNOR" id="Q66K64"/>
<dbReference type="UniPathway" id="UPA00143"/>
<dbReference type="BioGRID-ORCS" id="90379">
    <property type="hits" value="90 hits in 1192 CRISPR screens"/>
</dbReference>
<dbReference type="ChiTaRS" id="DCAF15">
    <property type="organism name" value="human"/>
</dbReference>
<dbReference type="GenomeRNAi" id="90379"/>
<dbReference type="Pharos" id="Q66K64">
    <property type="development level" value="Tdark"/>
</dbReference>
<dbReference type="PRO" id="PR:Q66K64"/>
<dbReference type="Proteomes" id="UP000005640">
    <property type="component" value="Chromosome 19"/>
</dbReference>
<dbReference type="RNAct" id="Q66K64">
    <property type="molecule type" value="protein"/>
</dbReference>
<dbReference type="Bgee" id="ENSG00000132017">
    <property type="expression patterns" value="Expressed in granulocyte and 94 other cell types or tissues"/>
</dbReference>
<dbReference type="ExpressionAtlas" id="Q66K64">
    <property type="expression patterns" value="baseline and differential"/>
</dbReference>
<dbReference type="GO" id="GO:0080008">
    <property type="term" value="C:Cul4-RING E3 ubiquitin ligase complex"/>
    <property type="evidence" value="ECO:0000314"/>
    <property type="project" value="UniProtKB"/>
</dbReference>
<dbReference type="GO" id="GO:0046872">
    <property type="term" value="F:metal ion binding"/>
    <property type="evidence" value="ECO:0007669"/>
    <property type="project" value="UniProtKB-KW"/>
</dbReference>
<dbReference type="GO" id="GO:0036094">
    <property type="term" value="F:small molecule binding"/>
    <property type="evidence" value="ECO:0000353"/>
    <property type="project" value="UniProtKB"/>
</dbReference>
<dbReference type="GO" id="GO:0002376">
    <property type="term" value="P:immune system process"/>
    <property type="evidence" value="ECO:0007669"/>
    <property type="project" value="UniProtKB-KW"/>
</dbReference>
<dbReference type="GO" id="GO:0000209">
    <property type="term" value="P:protein polyubiquitination"/>
    <property type="evidence" value="ECO:0000314"/>
    <property type="project" value="UniProtKB"/>
</dbReference>
<dbReference type="GO" id="GO:0016567">
    <property type="term" value="P:protein ubiquitination"/>
    <property type="evidence" value="ECO:0000318"/>
    <property type="project" value="GO_Central"/>
</dbReference>
<dbReference type="GO" id="GO:0032814">
    <property type="term" value="P:regulation of natural killer cell activation"/>
    <property type="evidence" value="ECO:0000315"/>
    <property type="project" value="UniProtKB"/>
</dbReference>
<dbReference type="CDD" id="cd20913">
    <property type="entry name" value="DCAF15-CTD"/>
    <property type="match status" value="1"/>
</dbReference>
<dbReference type="CDD" id="cd20917">
    <property type="entry name" value="DCAF15-NTD"/>
    <property type="match status" value="1"/>
</dbReference>
<dbReference type="InterPro" id="IPR038914">
    <property type="entry name" value="DCAF15"/>
</dbReference>
<dbReference type="InterPro" id="IPR047319">
    <property type="entry name" value="DCAF15_C"/>
</dbReference>
<dbReference type="InterPro" id="IPR032734">
    <property type="entry name" value="DCAF15_WD40"/>
</dbReference>
<dbReference type="PANTHER" id="PTHR28541">
    <property type="entry name" value="DDB1- AND CUL4-ASSOCIATED FACTOR 15"/>
    <property type="match status" value="1"/>
</dbReference>
<dbReference type="PANTHER" id="PTHR28541:SF1">
    <property type="entry name" value="DDB1- AND CUL4-ASSOCIATED FACTOR 15"/>
    <property type="match status" value="1"/>
</dbReference>
<dbReference type="Pfam" id="PF14939">
    <property type="entry name" value="DCAF15_WD40"/>
    <property type="match status" value="1"/>
</dbReference>
<gene>
    <name evidence="11 14" type="primary">DCAF15</name>
    <name type="synonym">C19orf72</name>
</gene>
<name>DCA15_HUMAN</name>
<feature type="chain" id="PRO_0000314485" description="DDB1- and CUL4-associated factor 15">
    <location>
        <begin position="1"/>
        <end position="600"/>
    </location>
</feature>
<feature type="region of interest" description="Disordered" evidence="1">
    <location>
        <begin position="1"/>
        <end position="30"/>
    </location>
</feature>
<feature type="region of interest" description="Disordered" evidence="1">
    <location>
        <begin position="280"/>
        <end position="316"/>
    </location>
</feature>
<feature type="compositionally biased region" description="Gly residues" evidence="1">
    <location>
        <begin position="13"/>
        <end position="27"/>
    </location>
</feature>
<feature type="compositionally biased region" description="Pro residues" evidence="1">
    <location>
        <begin position="280"/>
        <end position="295"/>
    </location>
</feature>
<feature type="binding site" evidence="7 9 15 16 17 18">
    <location>
        <position position="193"/>
    </location>
    <ligand>
        <name>Zn(2+)</name>
        <dbReference type="ChEBI" id="CHEBI:29105"/>
    </ligand>
</feature>
<feature type="binding site" evidence="7 9 15 16 17 18">
    <location>
        <position position="196"/>
    </location>
    <ligand>
        <name>Zn(2+)</name>
        <dbReference type="ChEBI" id="CHEBI:29105"/>
    </ligand>
</feature>
<feature type="binding site" evidence="7 9 15 16 17 18">
    <location>
        <position position="211"/>
    </location>
    <ligand>
        <name>Zn(2+)</name>
        <dbReference type="ChEBI" id="CHEBI:29105"/>
    </ligand>
</feature>
<feature type="binding site" evidence="7 9 15 16 17 18">
    <location>
        <position position="214"/>
    </location>
    <ligand>
        <name>Zn(2+)</name>
        <dbReference type="ChEBI" id="CHEBI:29105"/>
    </ligand>
</feature>
<feature type="binding site" evidence="7 9 10 15 16 18">
    <location>
        <position position="231"/>
    </location>
    <ligand>
        <name>E7820</name>
        <dbReference type="ChEBI" id="CHEBI:188454"/>
    </ligand>
</feature>
<feature type="binding site" evidence="7 9 10 15 16 17 18">
    <location>
        <begin position="234"/>
        <end position="235"/>
    </location>
    <ligand>
        <name>E7820</name>
        <dbReference type="ChEBI" id="CHEBI:188454"/>
    </ligand>
</feature>
<feature type="modified residue" description="Phosphoserine" evidence="23">
    <location>
        <position position="50"/>
    </location>
</feature>
<feature type="modified residue" description="Phosphoserine" evidence="23">
    <location>
        <position position="310"/>
    </location>
</feature>
<feature type="modified residue" description="Phosphoserine" evidence="22">
    <location>
        <position position="314"/>
    </location>
</feature>
<feature type="mutagenesis site" description="Abolished interaction with DDB1, DDA1 and RBM39 in presence of indisulam." evidence="8">
    <original>V</original>
    <variation>D</variation>
    <location>
        <position position="90"/>
    </location>
</feature>
<feature type="mutagenesis site" description="Abolished interaction with DDB1, DDA1 and RBM39 in presence of indisulam." evidence="8">
    <original>L</original>
    <variation>P</variation>
    <location>
        <position position="91"/>
    </location>
</feature>
<feature type="mutagenesis site" description="Abolished interaction with DDB1, DDA1 and RBM39 in presence of indisulam." evidence="8">
    <original>W</original>
    <variation>R</variation>
    <location>
        <position position="112"/>
    </location>
</feature>
<feature type="mutagenesis site" description="Abolished interaction with DDB1, DDA1 and RBM39 in presence of indisulam." evidence="8">
    <original>F</original>
    <variation>S</variation>
    <variation>V</variation>
    <location>
        <position position="129"/>
    </location>
</feature>
<feature type="mutagenesis site" description="Decreased interaction with DDB1, DDA1 and RBM39 in presence of indisulam." evidence="8">
    <original>V</original>
    <variation>D</variation>
    <location>
        <position position="182"/>
    </location>
</feature>
<feature type="mutagenesis site" description="Decreased interaction with DDB1, DDA1 and RBM39 in presence of indisulam." evidence="8">
    <original>C</original>
    <variation>Y</variation>
    <location>
        <position position="196"/>
    </location>
</feature>
<feature type="mutagenesis site" description="Decreased interaction with RBM39 in presence of indisulam, without affecting interaction with DDA1 and DDB1." evidence="8">
    <original>Q</original>
    <variation>R</variation>
    <location>
        <position position="232"/>
    </location>
</feature>
<feature type="mutagenesis site" description="Decreased interaction with DDB1, DDA1 and RBM39 in presence of indisulam." evidence="8">
    <original>L</original>
    <variation>P</variation>
    <location>
        <position position="244"/>
    </location>
</feature>
<feature type="mutagenesis site" description="Decreased interaction with DDA1 and RBM39 in presence of indisulam." evidence="8">
    <original>L</original>
    <variation>P</variation>
    <location>
        <position position="392"/>
    </location>
</feature>
<feature type="mutagenesis site" description="Decreased interaction with DDA1 and RBM39 in presence of indisulam." evidence="8">
    <original>T</original>
    <variation>P</variation>
    <location>
        <position position="420"/>
    </location>
</feature>
<feature type="mutagenesis site" description="Decreased interaction with DDA1 and RBM39 in presence of indisulam." evidence="8">
    <original>E</original>
    <variation>K</variation>
    <location>
        <position position="444"/>
    </location>
</feature>
<feature type="mutagenesis site" description="Decreased interaction with DDA1 and RBM39 in presence of indisulam." evidence="8">
    <original>V</original>
    <variation>D</variation>
    <location>
        <position position="453"/>
    </location>
</feature>
<feature type="mutagenesis site" description="Decreased interaction with RBM39 in presence of indisulam, without affecting interaction with DDA1 and DDB1." evidence="8">
    <original>D</original>
    <variation>H</variation>
    <variation>N</variation>
    <variation>V</variation>
    <location>
        <position position="475"/>
    </location>
</feature>
<feature type="helix" evidence="26">
    <location>
        <begin position="36"/>
        <end position="46"/>
    </location>
</feature>
<feature type="turn" evidence="26">
    <location>
        <begin position="51"/>
        <end position="56"/>
    </location>
</feature>
<feature type="strand" evidence="26">
    <location>
        <begin position="60"/>
        <end position="64"/>
    </location>
</feature>
<feature type="helix" evidence="26">
    <location>
        <begin position="65"/>
        <end position="68"/>
    </location>
</feature>
<feature type="strand" evidence="24">
    <location>
        <begin position="71"/>
        <end position="73"/>
    </location>
</feature>
<feature type="turn" evidence="24">
    <location>
        <begin position="74"/>
        <end position="77"/>
    </location>
</feature>
<feature type="strand" evidence="26">
    <location>
        <begin position="79"/>
        <end position="83"/>
    </location>
</feature>
<feature type="strand" evidence="26">
    <location>
        <begin position="87"/>
        <end position="96"/>
    </location>
</feature>
<feature type="strand" evidence="26">
    <location>
        <begin position="100"/>
        <end position="102"/>
    </location>
</feature>
<feature type="strand" evidence="26">
    <location>
        <begin position="105"/>
        <end position="113"/>
    </location>
</feature>
<feature type="strand" evidence="26">
    <location>
        <begin position="121"/>
        <end position="129"/>
    </location>
</feature>
<feature type="strand" evidence="25">
    <location>
        <begin position="134"/>
        <end position="136"/>
    </location>
</feature>
<feature type="strand" evidence="26">
    <location>
        <begin position="139"/>
        <end position="144"/>
    </location>
</feature>
<feature type="strand" evidence="26">
    <location>
        <begin position="150"/>
        <end position="157"/>
    </location>
</feature>
<feature type="strand" evidence="26">
    <location>
        <begin position="159"/>
        <end position="162"/>
    </location>
</feature>
<feature type="strand" evidence="26">
    <location>
        <begin position="178"/>
        <end position="186"/>
    </location>
</feature>
<feature type="helix" evidence="24">
    <location>
        <begin position="194"/>
        <end position="199"/>
    </location>
</feature>
<feature type="turn" evidence="24">
    <location>
        <begin position="200"/>
        <end position="202"/>
    </location>
</feature>
<feature type="strand" evidence="26">
    <location>
        <begin position="217"/>
        <end position="224"/>
    </location>
</feature>
<feature type="helix" evidence="26">
    <location>
        <begin position="233"/>
        <end position="236"/>
    </location>
</feature>
<feature type="strand" evidence="26">
    <location>
        <begin position="242"/>
        <end position="246"/>
    </location>
</feature>
<feature type="strand" evidence="26">
    <location>
        <begin position="248"/>
        <end position="259"/>
    </location>
</feature>
<feature type="strand" evidence="26">
    <location>
        <begin position="389"/>
        <end position="395"/>
    </location>
</feature>
<feature type="strand" evidence="26">
    <location>
        <begin position="420"/>
        <end position="427"/>
    </location>
</feature>
<feature type="strand" evidence="26">
    <location>
        <begin position="430"/>
        <end position="432"/>
    </location>
</feature>
<feature type="strand" evidence="26">
    <location>
        <begin position="440"/>
        <end position="449"/>
    </location>
</feature>
<feature type="helix" evidence="26">
    <location>
        <begin position="450"/>
        <end position="460"/>
    </location>
</feature>
<feature type="turn" evidence="26">
    <location>
        <begin position="463"/>
        <end position="467"/>
    </location>
</feature>
<feature type="strand" evidence="26">
    <location>
        <begin position="468"/>
        <end position="482"/>
    </location>
</feature>
<feature type="turn" evidence="26">
    <location>
        <begin position="483"/>
        <end position="486"/>
    </location>
</feature>
<feature type="strand" evidence="26">
    <location>
        <begin position="487"/>
        <end position="498"/>
    </location>
</feature>
<feature type="strand" evidence="26">
    <location>
        <begin position="511"/>
        <end position="522"/>
    </location>
</feature>
<feature type="turn" evidence="26">
    <location>
        <begin position="523"/>
        <end position="525"/>
    </location>
</feature>
<feature type="strand" evidence="26">
    <location>
        <begin position="528"/>
        <end position="533"/>
    </location>
</feature>
<feature type="helix" evidence="26">
    <location>
        <begin position="544"/>
        <end position="561"/>
    </location>
</feature>
<feature type="strand" evidence="26">
    <location>
        <begin position="568"/>
        <end position="571"/>
    </location>
</feature>
<feature type="strand" evidence="26">
    <location>
        <begin position="573"/>
        <end position="575"/>
    </location>
</feature>
<feature type="turn" evidence="26">
    <location>
        <begin position="579"/>
        <end position="582"/>
    </location>
</feature>
<feature type="strand" evidence="26">
    <location>
        <begin position="587"/>
        <end position="591"/>
    </location>
</feature>
<feature type="turn" evidence="26">
    <location>
        <begin position="592"/>
        <end position="595"/>
    </location>
</feature>
<feature type="strand" evidence="26">
    <location>
        <begin position="596"/>
        <end position="599"/>
    </location>
</feature>
<proteinExistence type="evidence at protein level"/>
<accession>Q66K64</accession>
<accession>B3KS86</accession>
<accession>Q96DW0</accession>
<accession>Q9BU31</accession>
<comment type="function">
    <text evidence="2 5">Substrate-recognition component of the DCX(DCAF15) complex, a cullin-4-RING E3 ubiquitin-protein ligase complex that mediates ubiquitination and degradation of target proteins (PubMed:16949367, PubMed:31452512). The DCX(DCAF15) complex acts as a regulator of the natural killer (NK) cells effector functions, possibly by mediating ubiquitination and degradation of cohesin subunits SMC1A and SMC3 (PubMed:31452512). May play a role in the activation of antigen-presenting cells (APC) and their interaction with NK cells (PubMed:31452512).</text>
</comment>
<comment type="function">
    <text evidence="3 4 5 6 7 8 10">Binding of aryl sulfonamide anticancer drugs, such as indisulam (E7070) or E7820, change the substrate specificity of the DCX(DCAF15) complex, leading to promote ubiquitination and degradation of splicing factor RBM39 (PubMed:28302793, PubMed:28437394, PubMed:31452512, PubMed:31693891). RBM39 degradation results in splicing defects and death in cancer cell lines (PubMed:28302793, PubMed:28437394, PubMed:31693891). Aryl sulfonamide anticancer drugs change the substrate specificity of DCAF15 by acting as a molecular glue that promotes binding between DCAF15 and weak affinity interactor RBM39 (PubMed:31686031, PubMed:31819272). Aryl sulfonamide anticancer drugs also promote ubiquitination and degradation of RBM23 and PRPF39 (PubMed:31626998, PubMed:31686031, PubMed:31693891).</text>
</comment>
<comment type="activity regulation">
    <text evidence="3 4 7 10">Aryl sulfonamide anticancer drugs change the substrate specificity of DCAF15 by acting as a molecular glue that promotes binding between DCAF15 and weak affinity interactors, such as RBM39.</text>
</comment>
<comment type="pathway">
    <text evidence="3 4 5 8">Protein modification; protein ubiquitination.</text>
</comment>
<comment type="subunit">
    <text evidence="3 4 5 7 8 9 10 13">Component of the DCX(DCAF15) complex, also named CLR4(DCAF15) complex, composed of DCAF15, DDB1, cullin-4 (CUL4A or CUL4B), DDA1 and RBX1.</text>
</comment>
<comment type="interaction">
    <interactant intactId="EBI-2559052">
        <id>Q66K64</id>
    </interactant>
    <interactant intactId="EBI-10226430">
        <id>Q0D2K3</id>
        <label>RIPPLY1</label>
    </interactant>
    <organismsDiffer>false</organismsDiffer>
    <experiments>3</experiments>
</comment>
<comment type="sequence caution" evidence="12">
    <conflict type="frameshift">
        <sequence resource="EMBL-CDS" id="AAH13280"/>
    </conflict>
</comment>
<sequence>MAPSSKSERNSGAGSGGGGPGGAGGKRAAGRRREHVLKQLERVKISGQLSPRLFRKLPPRVCVSLKNIVDEDFLYAGHIFLGFSKCGRYVLSYTSSSGDDDFSFYIYHLYWWEFNVHSKLKLVRQVRLFQDEEIYSDLYLTVCEWPSDASKVIVFGFNTRSANGMLMNMMMMSDENHRDIYVSTVAVPPPGRCAACQDASRAHPGDPNAQCLRHGFMLHTKYQVVYPFPTFQPAFQLKKDQVVLLNTSYSLVACAVSVHSAGDRSFCQILYDHSTCPLAPASPPEPQSPELPPALPSFCPEAAPARSSGSPEPSPAIAKAKEFVADIFRRAKEAKGGVPEEARPALCPGPSGSRCRAHSEPLALCGETAPRDSPPASEAPASEPGYVNYTKLYYVLESGEGTEPEDELEDDKISLPFVVTDLRGRNLRPMRERTAVQGQYLTVEQLTLDFEYVINEVIRHDATWGHQFCSFSDYDIVILEVCPETNQVLINIGLLLLAFPSPTEEGQLRPKTYHTSLKVAWDLNTGIFETVSVGDLTEVKGQTSGSVWSSYRKSCVDMVMKWLVPESSGRYVNRMTNEALHKGCSLKVLADSERYTWIVL</sequence>